<protein>
    <recommendedName>
        <fullName evidence="1">FMN-dependent NADH:quinone oxidoreductase</fullName>
        <ecNumber evidence="1">1.6.5.-</ecNumber>
    </recommendedName>
    <alternativeName>
        <fullName evidence="1">Azo-dye reductase</fullName>
    </alternativeName>
    <alternativeName>
        <fullName evidence="1">FMN-dependent NADH-azo compound oxidoreductase</fullName>
    </alternativeName>
    <alternativeName>
        <fullName evidence="1">FMN-dependent NADH-azoreductase</fullName>
        <ecNumber evidence="1">1.7.1.17</ecNumber>
    </alternativeName>
</protein>
<keyword id="KW-0285">Flavoprotein</keyword>
<keyword id="KW-0288">FMN</keyword>
<keyword id="KW-0520">NAD</keyword>
<keyword id="KW-0560">Oxidoreductase</keyword>
<proteinExistence type="inferred from homology"/>
<sequence>MTKVLYVSANPKPTELSYSKQVAETFVSTLKAENASIEVEAIELYDVDVQEIDGDVLSAWGKFASGEALTDVEAKKVGTMSGMLEKFMEADLYVFATPMWNFFFPARMKMFLDSVLMAGKTFRYTEQGPVGLLENKQAIHIQGTGGIYTGTDLNFADAYLRQALAFVGVSEVTTVAVEGMNQYPDKIEEIVADAKAKAEALAKEVAGAVTV</sequence>
<comment type="function">
    <text evidence="1">Quinone reductase that provides resistance to thiol-specific stress caused by electrophilic quinones.</text>
</comment>
<comment type="function">
    <text evidence="1">Also exhibits azoreductase activity. Catalyzes the reductive cleavage of the azo bond in aromatic azo compounds to the corresponding amines.</text>
</comment>
<comment type="catalytic activity">
    <reaction evidence="1">
        <text>2 a quinone + NADH + H(+) = 2 a 1,4-benzosemiquinone + NAD(+)</text>
        <dbReference type="Rhea" id="RHEA:65952"/>
        <dbReference type="ChEBI" id="CHEBI:15378"/>
        <dbReference type="ChEBI" id="CHEBI:57540"/>
        <dbReference type="ChEBI" id="CHEBI:57945"/>
        <dbReference type="ChEBI" id="CHEBI:132124"/>
        <dbReference type="ChEBI" id="CHEBI:134225"/>
    </reaction>
</comment>
<comment type="catalytic activity">
    <reaction evidence="1">
        <text>N,N-dimethyl-1,4-phenylenediamine + anthranilate + 2 NAD(+) = 2-(4-dimethylaminophenyl)diazenylbenzoate + 2 NADH + 2 H(+)</text>
        <dbReference type="Rhea" id="RHEA:55872"/>
        <dbReference type="ChEBI" id="CHEBI:15378"/>
        <dbReference type="ChEBI" id="CHEBI:15783"/>
        <dbReference type="ChEBI" id="CHEBI:16567"/>
        <dbReference type="ChEBI" id="CHEBI:57540"/>
        <dbReference type="ChEBI" id="CHEBI:57945"/>
        <dbReference type="ChEBI" id="CHEBI:71579"/>
        <dbReference type="EC" id="1.7.1.17"/>
    </reaction>
</comment>
<comment type="cofactor">
    <cofactor evidence="1">
        <name>FMN</name>
        <dbReference type="ChEBI" id="CHEBI:58210"/>
    </cofactor>
    <text evidence="1">Binds 1 FMN per subunit.</text>
</comment>
<comment type="subunit">
    <text evidence="1">Homodimer.</text>
</comment>
<comment type="similarity">
    <text evidence="1">Belongs to the azoreductase type 1 family.</text>
</comment>
<gene>
    <name evidence="1" type="primary">azoR</name>
    <name type="ordered locus">EAT1b_2007</name>
</gene>
<name>AZOR_EXISA</name>
<accession>C4L0W8</accession>
<feature type="chain" id="PRO_1000213898" description="FMN-dependent NADH:quinone oxidoreductase">
    <location>
        <begin position="1"/>
        <end position="211"/>
    </location>
</feature>
<feature type="binding site" evidence="1">
    <location>
        <begin position="17"/>
        <end position="19"/>
    </location>
    <ligand>
        <name>FMN</name>
        <dbReference type="ChEBI" id="CHEBI:58210"/>
    </ligand>
</feature>
<feature type="binding site" evidence="1">
    <location>
        <begin position="99"/>
        <end position="102"/>
    </location>
    <ligand>
        <name>FMN</name>
        <dbReference type="ChEBI" id="CHEBI:58210"/>
    </ligand>
</feature>
<organism>
    <name type="scientific">Exiguobacterium sp. (strain ATCC BAA-1283 / AT1b)</name>
    <dbReference type="NCBI Taxonomy" id="360911"/>
    <lineage>
        <taxon>Bacteria</taxon>
        <taxon>Bacillati</taxon>
        <taxon>Bacillota</taxon>
        <taxon>Bacilli</taxon>
        <taxon>Bacillales</taxon>
        <taxon>Bacillales Family XII. Incertae Sedis</taxon>
        <taxon>Exiguobacterium</taxon>
    </lineage>
</organism>
<dbReference type="EC" id="1.6.5.-" evidence="1"/>
<dbReference type="EC" id="1.7.1.17" evidence="1"/>
<dbReference type="EMBL" id="CP001615">
    <property type="protein sequence ID" value="ACQ70931.1"/>
    <property type="molecule type" value="Genomic_DNA"/>
</dbReference>
<dbReference type="RefSeq" id="WP_015880490.1">
    <property type="nucleotide sequence ID" value="NC_012673.1"/>
</dbReference>
<dbReference type="SMR" id="C4L0W8"/>
<dbReference type="STRING" id="360911.EAT1b_2007"/>
<dbReference type="KEGG" id="eat:EAT1b_2007"/>
<dbReference type="eggNOG" id="COG1182">
    <property type="taxonomic scope" value="Bacteria"/>
</dbReference>
<dbReference type="HOGENOM" id="CLU_088964_3_1_9"/>
<dbReference type="OrthoDB" id="9805013at2"/>
<dbReference type="Proteomes" id="UP000000716">
    <property type="component" value="Chromosome"/>
</dbReference>
<dbReference type="GO" id="GO:0009055">
    <property type="term" value="F:electron transfer activity"/>
    <property type="evidence" value="ECO:0007669"/>
    <property type="project" value="UniProtKB-UniRule"/>
</dbReference>
<dbReference type="GO" id="GO:0010181">
    <property type="term" value="F:FMN binding"/>
    <property type="evidence" value="ECO:0007669"/>
    <property type="project" value="UniProtKB-UniRule"/>
</dbReference>
<dbReference type="GO" id="GO:0016652">
    <property type="term" value="F:oxidoreductase activity, acting on NAD(P)H as acceptor"/>
    <property type="evidence" value="ECO:0007669"/>
    <property type="project" value="UniProtKB-UniRule"/>
</dbReference>
<dbReference type="GO" id="GO:0016655">
    <property type="term" value="F:oxidoreductase activity, acting on NAD(P)H, quinone or similar compound as acceptor"/>
    <property type="evidence" value="ECO:0007669"/>
    <property type="project" value="InterPro"/>
</dbReference>
<dbReference type="Gene3D" id="3.40.50.360">
    <property type="match status" value="1"/>
</dbReference>
<dbReference type="HAMAP" id="MF_01216">
    <property type="entry name" value="Azoreductase_type1"/>
    <property type="match status" value="1"/>
</dbReference>
<dbReference type="InterPro" id="IPR003680">
    <property type="entry name" value="Flavodoxin_fold"/>
</dbReference>
<dbReference type="InterPro" id="IPR029039">
    <property type="entry name" value="Flavoprotein-like_sf"/>
</dbReference>
<dbReference type="InterPro" id="IPR050104">
    <property type="entry name" value="FMN-dep_NADH:Q_OxRdtase_AzoR1"/>
</dbReference>
<dbReference type="InterPro" id="IPR023048">
    <property type="entry name" value="NADH:quinone_OxRdtase_FMN_depd"/>
</dbReference>
<dbReference type="PANTHER" id="PTHR43741">
    <property type="entry name" value="FMN-DEPENDENT NADH-AZOREDUCTASE 1"/>
    <property type="match status" value="1"/>
</dbReference>
<dbReference type="PANTHER" id="PTHR43741:SF7">
    <property type="entry name" value="FMN-DEPENDENT NADH:QUINONE OXIDOREDUCTASE"/>
    <property type="match status" value="1"/>
</dbReference>
<dbReference type="Pfam" id="PF02525">
    <property type="entry name" value="Flavodoxin_2"/>
    <property type="match status" value="1"/>
</dbReference>
<dbReference type="SUPFAM" id="SSF52218">
    <property type="entry name" value="Flavoproteins"/>
    <property type="match status" value="1"/>
</dbReference>
<evidence type="ECO:0000255" key="1">
    <source>
        <dbReference type="HAMAP-Rule" id="MF_01216"/>
    </source>
</evidence>
<reference key="1">
    <citation type="journal article" date="2011" name="J. Bacteriol.">
        <title>Complete genome sequence of the Thermophilic Bacterium Exiguobacterium sp. AT1b.</title>
        <authorList>
            <person name="Vishnivetskaya T.A."/>
            <person name="Lucas S."/>
            <person name="Copeland A."/>
            <person name="Lapidus A."/>
            <person name="Glavina del Rio T."/>
            <person name="Dalin E."/>
            <person name="Tice H."/>
            <person name="Bruce D.C."/>
            <person name="Goodwin L.A."/>
            <person name="Pitluck S."/>
            <person name="Saunders E."/>
            <person name="Brettin T."/>
            <person name="Detter C."/>
            <person name="Han C."/>
            <person name="Larimer F."/>
            <person name="Land M.L."/>
            <person name="Hauser L.J."/>
            <person name="Kyrpides N.C."/>
            <person name="Ovchinnikova G."/>
            <person name="Kathariou S."/>
            <person name="Ramaley R.F."/>
            <person name="Rodrigues D.F."/>
            <person name="Hendrix C."/>
            <person name="Richardson P."/>
            <person name="Tiedje J.M."/>
        </authorList>
    </citation>
    <scope>NUCLEOTIDE SEQUENCE [LARGE SCALE GENOMIC DNA]</scope>
    <source>
        <strain>ATCC BAA-1283 / AT1b</strain>
    </source>
</reference>